<feature type="chain" id="PRO_0000250568" description="E3 ubiquitin-protein ligase ZNF598">
    <location>
        <begin position="1"/>
        <end position="904"/>
    </location>
</feature>
<feature type="zinc finger region" description="RING-type" evidence="2">
    <location>
        <begin position="29"/>
        <end position="69"/>
    </location>
</feature>
<feature type="zinc finger region" description="C2H2-type" evidence="1">
    <location>
        <begin position="187"/>
        <end position="210"/>
    </location>
</feature>
<feature type="region of interest" description="Disordered" evidence="3">
    <location>
        <begin position="312"/>
        <end position="469"/>
    </location>
</feature>
<feature type="region of interest" description="Disordered" evidence="3">
    <location>
        <begin position="490"/>
        <end position="656"/>
    </location>
</feature>
<feature type="compositionally biased region" description="Low complexity" evidence="3">
    <location>
        <begin position="346"/>
        <end position="358"/>
    </location>
</feature>
<feature type="compositionally biased region" description="Basic and acidic residues" evidence="3">
    <location>
        <begin position="359"/>
        <end position="388"/>
    </location>
</feature>
<feature type="compositionally biased region" description="Polar residues" evidence="3">
    <location>
        <begin position="404"/>
        <end position="416"/>
    </location>
</feature>
<feature type="compositionally biased region" description="Low complexity" evidence="3">
    <location>
        <begin position="418"/>
        <end position="431"/>
    </location>
</feature>
<feature type="compositionally biased region" description="Low complexity" evidence="3">
    <location>
        <begin position="447"/>
        <end position="461"/>
    </location>
</feature>
<feature type="compositionally biased region" description="Low complexity" evidence="3">
    <location>
        <begin position="502"/>
        <end position="513"/>
    </location>
</feature>
<feature type="compositionally biased region" description="Polar residues" evidence="3">
    <location>
        <begin position="521"/>
        <end position="531"/>
    </location>
</feature>
<feature type="compositionally biased region" description="Basic residues" evidence="3">
    <location>
        <begin position="534"/>
        <end position="543"/>
    </location>
</feature>
<feature type="compositionally biased region" description="Polar residues" evidence="3">
    <location>
        <begin position="564"/>
        <end position="584"/>
    </location>
</feature>
<feature type="modified residue" description="Phosphotyrosine" evidence="29">
    <location>
        <position position="306"/>
    </location>
</feature>
<feature type="modified residue" description="Phosphoserine" evidence="30">
    <location>
        <position position="437"/>
    </location>
</feature>
<feature type="splice variant" id="VSP_020660" description="In isoform 4." evidence="19">
    <location>
        <begin position="1"/>
        <end position="397"/>
    </location>
</feature>
<feature type="splice variant" id="VSP_020661" description="In isoform 2." evidence="20">
    <location>
        <begin position="335"/>
        <end position="337"/>
    </location>
</feature>
<feature type="splice variant" id="VSP_020662" description="In isoform 4." evidence="19">
    <original>EGPGPKETSTNGPVSQEAFSVTGPAAPGCVGVPG</original>
    <variation>MVGGCGQPQVGAGRAGMEPRGLIAVDQLCFPAPS</variation>
    <location>
        <begin position="398"/>
        <end position="431"/>
    </location>
</feature>
<feature type="splice variant" id="VSP_020663" description="In isoform 2 and isoform 3." evidence="20 21">
    <location>
        <begin position="424"/>
        <end position="429"/>
    </location>
</feature>
<feature type="splice variant" id="VSP_020664" description="In isoform 2 and isoform 4." evidence="19 20">
    <original>Q</original>
    <variation>QE</variation>
    <location>
        <position position="551"/>
    </location>
</feature>
<feature type="splice variant" id="VSP_020665" description="In isoform 4." evidence="19">
    <location>
        <begin position="738"/>
        <end position="904"/>
    </location>
</feature>
<feature type="sequence variant" id="VAR_034470" description="In dbSNP:rs11556528." evidence="4 5">
    <original>S</original>
    <variation>Y</variation>
    <location>
        <position position="453"/>
    </location>
</feature>
<feature type="sequence variant" id="VAR_059818" description="In dbSNP:rs11248905." evidence="4 5">
    <original>A</original>
    <variation>T</variation>
    <location>
        <position position="608"/>
    </location>
</feature>
<feature type="sequence variant" id="VAR_052147" description="In dbSNP:rs2286469." evidence="4 5">
    <original>T</original>
    <variation>M</variation>
    <location>
        <position position="637"/>
    </location>
</feature>
<feature type="sequence variant" id="VAR_034471" description="In dbSNP:rs2286468." evidence="6">
    <original>C</original>
    <variation>S</variation>
    <location>
        <position position="725"/>
    </location>
</feature>
<feature type="mutagenesis site" description="Abolishes E3 ubiquitin-protein ligase activity, leading to enhanced readthrough on the poly(A)-stall sequences." evidence="9">
    <original>C</original>
    <variation>A</variation>
    <location>
        <position position="29"/>
    </location>
</feature>
<feature type="modified residue" description="Phosphoserine" evidence="31 32">
    <location sequence="Q86UK7-2">
        <position position="428"/>
    </location>
</feature>
<feature type="modified residue" description="Phosphoserine" evidence="31 32">
    <location sequence="Q86UK7-3">
        <position position="431"/>
    </location>
</feature>
<protein>
    <recommendedName>
        <fullName evidence="23">E3 ubiquitin-protein ligase ZNF598</fullName>
        <ecNumber evidence="24 25 26 27">2.3.2.27</ecNumber>
    </recommendedName>
    <alternativeName>
        <fullName evidence="28">Zinc finger protein 598</fullName>
    </alternativeName>
</protein>
<keyword id="KW-0025">Alternative splicing</keyword>
<keyword id="KW-0963">Cytoplasm</keyword>
<keyword id="KW-0479">Metal-binding</keyword>
<keyword id="KW-0597">Phosphoprotein</keyword>
<keyword id="KW-1267">Proteomics identification</keyword>
<keyword id="KW-1185">Reference proteome</keyword>
<keyword id="KW-0808">Transferase</keyword>
<keyword id="KW-0810">Translation regulation</keyword>
<keyword id="KW-0833">Ubl conjugation pathway</keyword>
<keyword id="KW-0862">Zinc</keyword>
<keyword id="KW-0863">Zinc-finger</keyword>
<name>ZN598_HUMAN</name>
<sequence>MAAAGGAEGRRAALEAAAAAAPERGGGSCVLCCGDLEATALGRCDHPVCYRCSTKMRVLCEQRYCAVCREELRQVVFGKKLPAFATIPIHQLQHEKKYDIYFADGKVYALYRQLLQHECPRCPELPPFSLFGDLEQHMRRQHELFCCRLCLQHLQIFTYERKWYSRKDLARHRMQGDPDDTSHRGHPLCKFCDERYLDNDELLKHLRRDHYFCHFCDSDGAQDYYSDYAYLREHFREKHFLCEEGRCSTEQFTHAFRTEIDLKAHRTACHSRSRAEARQNRHIDLQFSYAPRHSRRNEGVVGGEDYEEVDRYSRQGRVARAGTRGAQQSRRGSWRYKREEEDREVAAAVRASVAAQQQEEARRSEDQEEGGRPKKEEAAARGPEDPRGPRRSPRTQGEGPGPKETSTNGPVSQEAFSVTGPAAPGCVGVPGALPPPSPKLKDEDFPSLSASTSSSCSTAATPGPVGLALPYAIPARGRSAFQEEDFPALVSSVPKPGTAPTSLVSAWNSSSSSKKVAQPPLSAQATGSGQPTRKAGKGSRGGRKGGPPFTQEEEEDGGPALQELLSTRPTGSVSSTLGLASIQPSKVGKKKKVGSEKPGTTLPQPPPATCPPGALQAPEAPASRAEGPVAVVVNGHTEGPAPARSAPKEPPGLPRPLGSFPCPTPQEDFPALGGPCPPRMPPPPGFSAVVLLKGTPPPPPPGLVPPISKPPPGFSGLLPSPHPACVPSPATTTTTKAPRLLPAPRAYLVPENFRERNLQLIQSIRDFLQSDEARFSEFKSHSGEFRQGLISAAQYYKSCRDLLGENFQKVFNELLVLLPDTAKQQELLSAHTDFCNREKPLSTKSKKNKKSAWQATTQQAGLDCRVCPTCQQVLAHGDASSHQALHAARDDDFPSLQAIARIIT</sequence>
<accession>Q86UK7</accession>
<accession>Q8IW49</accession>
<accession>Q8N3D9</accession>
<accession>Q96FG3</accession>
<accession>Q9H7J3</accession>
<reference key="1">
    <citation type="journal article" date="2004" name="Nat. Genet.">
        <title>Complete sequencing and characterization of 21,243 full-length human cDNAs.</title>
        <authorList>
            <person name="Ota T."/>
            <person name="Suzuki Y."/>
            <person name="Nishikawa T."/>
            <person name="Otsuki T."/>
            <person name="Sugiyama T."/>
            <person name="Irie R."/>
            <person name="Wakamatsu A."/>
            <person name="Hayashi K."/>
            <person name="Sato H."/>
            <person name="Nagai K."/>
            <person name="Kimura K."/>
            <person name="Makita H."/>
            <person name="Sekine M."/>
            <person name="Obayashi M."/>
            <person name="Nishi T."/>
            <person name="Shibahara T."/>
            <person name="Tanaka T."/>
            <person name="Ishii S."/>
            <person name="Yamamoto J."/>
            <person name="Saito K."/>
            <person name="Kawai Y."/>
            <person name="Isono Y."/>
            <person name="Nakamura Y."/>
            <person name="Nagahari K."/>
            <person name="Murakami K."/>
            <person name="Yasuda T."/>
            <person name="Iwayanagi T."/>
            <person name="Wagatsuma M."/>
            <person name="Shiratori A."/>
            <person name="Sudo H."/>
            <person name="Hosoiri T."/>
            <person name="Kaku Y."/>
            <person name="Kodaira H."/>
            <person name="Kondo H."/>
            <person name="Sugawara M."/>
            <person name="Takahashi M."/>
            <person name="Kanda K."/>
            <person name="Yokoi T."/>
            <person name="Furuya T."/>
            <person name="Kikkawa E."/>
            <person name="Omura Y."/>
            <person name="Abe K."/>
            <person name="Kamihara K."/>
            <person name="Katsuta N."/>
            <person name="Sato K."/>
            <person name="Tanikawa M."/>
            <person name="Yamazaki M."/>
            <person name="Ninomiya K."/>
            <person name="Ishibashi T."/>
            <person name="Yamashita H."/>
            <person name="Murakawa K."/>
            <person name="Fujimori K."/>
            <person name="Tanai H."/>
            <person name="Kimata M."/>
            <person name="Watanabe M."/>
            <person name="Hiraoka S."/>
            <person name="Chiba Y."/>
            <person name="Ishida S."/>
            <person name="Ono Y."/>
            <person name="Takiguchi S."/>
            <person name="Watanabe S."/>
            <person name="Yosida M."/>
            <person name="Hotuta T."/>
            <person name="Kusano J."/>
            <person name="Kanehori K."/>
            <person name="Takahashi-Fujii A."/>
            <person name="Hara H."/>
            <person name="Tanase T.-O."/>
            <person name="Nomura Y."/>
            <person name="Togiya S."/>
            <person name="Komai F."/>
            <person name="Hara R."/>
            <person name="Takeuchi K."/>
            <person name="Arita M."/>
            <person name="Imose N."/>
            <person name="Musashino K."/>
            <person name="Yuuki H."/>
            <person name="Oshima A."/>
            <person name="Sasaki N."/>
            <person name="Aotsuka S."/>
            <person name="Yoshikawa Y."/>
            <person name="Matsunawa H."/>
            <person name="Ichihara T."/>
            <person name="Shiohata N."/>
            <person name="Sano S."/>
            <person name="Moriya S."/>
            <person name="Momiyama H."/>
            <person name="Satoh N."/>
            <person name="Takami S."/>
            <person name="Terashima Y."/>
            <person name="Suzuki O."/>
            <person name="Nakagawa S."/>
            <person name="Senoh A."/>
            <person name="Mizoguchi H."/>
            <person name="Goto Y."/>
            <person name="Shimizu F."/>
            <person name="Wakebe H."/>
            <person name="Hishigaki H."/>
            <person name="Watanabe T."/>
            <person name="Sugiyama A."/>
            <person name="Takemoto M."/>
            <person name="Kawakami B."/>
            <person name="Yamazaki M."/>
            <person name="Watanabe K."/>
            <person name="Kumagai A."/>
            <person name="Itakura S."/>
            <person name="Fukuzumi Y."/>
            <person name="Fujimori Y."/>
            <person name="Komiyama M."/>
            <person name="Tashiro H."/>
            <person name="Tanigami A."/>
            <person name="Fujiwara T."/>
            <person name="Ono T."/>
            <person name="Yamada K."/>
            <person name="Fujii Y."/>
            <person name="Ozaki K."/>
            <person name="Hirao M."/>
            <person name="Ohmori Y."/>
            <person name="Kawabata A."/>
            <person name="Hikiji T."/>
            <person name="Kobatake N."/>
            <person name="Inagaki H."/>
            <person name="Ikema Y."/>
            <person name="Okamoto S."/>
            <person name="Okitani R."/>
            <person name="Kawakami T."/>
            <person name="Noguchi S."/>
            <person name="Itoh T."/>
            <person name="Shigeta K."/>
            <person name="Senba T."/>
            <person name="Matsumura K."/>
            <person name="Nakajima Y."/>
            <person name="Mizuno T."/>
            <person name="Morinaga M."/>
            <person name="Sasaki M."/>
            <person name="Togashi T."/>
            <person name="Oyama M."/>
            <person name="Hata H."/>
            <person name="Watanabe M."/>
            <person name="Komatsu T."/>
            <person name="Mizushima-Sugano J."/>
            <person name="Satoh T."/>
            <person name="Shirai Y."/>
            <person name="Takahashi Y."/>
            <person name="Nakagawa K."/>
            <person name="Okumura K."/>
            <person name="Nagase T."/>
            <person name="Nomura N."/>
            <person name="Kikuchi H."/>
            <person name="Masuho Y."/>
            <person name="Yamashita R."/>
            <person name="Nakai K."/>
            <person name="Yada T."/>
            <person name="Nakamura Y."/>
            <person name="Ohara O."/>
            <person name="Isogai T."/>
            <person name="Sugano S."/>
        </authorList>
    </citation>
    <scope>NUCLEOTIDE SEQUENCE [LARGE SCALE MRNA] (ISOFORM 4)</scope>
    <scope>VARIANTS TYR-453; THR-608 AND MET-637</scope>
    <source>
        <tissue>Spleen</tissue>
    </source>
</reference>
<reference key="2">
    <citation type="journal article" date="2004" name="Genome Res.">
        <title>The status, quality, and expansion of the NIH full-length cDNA project: the Mammalian Gene Collection (MGC).</title>
        <authorList>
            <consortium name="The MGC Project Team"/>
        </authorList>
    </citation>
    <scope>NUCLEOTIDE SEQUENCE [LARGE SCALE MRNA] (ISOFORM 1)</scope>
    <scope>NUCLEOTIDE SEQUENCE [LARGE SCALE MRNA] OF 236-904 (ISOFORM 2)</scope>
    <scope>VARIANTS TYR-453; THR-608 AND MET-637</scope>
    <source>
        <tissue>Lung</tissue>
        <tissue>Skin</tissue>
    </source>
</reference>
<reference key="3">
    <citation type="journal article" date="2007" name="BMC Genomics">
        <title>The full-ORF clone resource of the German cDNA consortium.</title>
        <authorList>
            <person name="Bechtel S."/>
            <person name="Rosenfelder H."/>
            <person name="Duda A."/>
            <person name="Schmidt C.P."/>
            <person name="Ernst U."/>
            <person name="Wellenreuther R."/>
            <person name="Mehrle A."/>
            <person name="Schuster C."/>
            <person name="Bahr A."/>
            <person name="Bloecker H."/>
            <person name="Heubner D."/>
            <person name="Hoerlein A."/>
            <person name="Michel G."/>
            <person name="Wedler H."/>
            <person name="Koehrer K."/>
            <person name="Ottenwaelder B."/>
            <person name="Poustka A."/>
            <person name="Wiemann S."/>
            <person name="Schupp I."/>
        </authorList>
    </citation>
    <scope>NUCLEOTIDE SEQUENCE [LARGE SCALE MRNA] OF 376-904 (ISOFORM 3)</scope>
    <scope>VARIANT SER-725</scope>
    <source>
        <tissue>Melanoma</tissue>
    </source>
</reference>
<reference key="4">
    <citation type="journal article" date="2005" name="Nat. Biotechnol.">
        <title>Immunoaffinity profiling of tyrosine phosphorylation in cancer cells.</title>
        <authorList>
            <person name="Rush J."/>
            <person name="Moritz A."/>
            <person name="Lee K.A."/>
            <person name="Guo A."/>
            <person name="Goss V.L."/>
            <person name="Spek E.J."/>
            <person name="Zhang H."/>
            <person name="Zha X.-M."/>
            <person name="Polakiewicz R.D."/>
            <person name="Comb M.J."/>
        </authorList>
    </citation>
    <scope>PHOSPHORYLATION [LARGE SCALE ANALYSIS] AT TYR-306</scope>
    <scope>IDENTIFICATION BY MASS SPECTROMETRY [LARGE SCALE ANALYSIS]</scope>
</reference>
<reference key="5">
    <citation type="journal article" date="2008" name="Proc. Natl. Acad. Sci. U.S.A.">
        <title>A quantitative atlas of mitotic phosphorylation.</title>
        <authorList>
            <person name="Dephoure N."/>
            <person name="Zhou C."/>
            <person name="Villen J."/>
            <person name="Beausoleil S.A."/>
            <person name="Bakalarski C.E."/>
            <person name="Elledge S.J."/>
            <person name="Gygi S.P."/>
        </authorList>
    </citation>
    <scope>PHOSPHORYLATION [LARGE SCALE ANALYSIS] AT SER-437</scope>
    <scope>IDENTIFICATION BY MASS SPECTROMETRY [LARGE SCALE ANALYSIS]</scope>
    <source>
        <tissue>Cervix carcinoma</tissue>
    </source>
</reference>
<reference key="6">
    <citation type="journal article" date="2009" name="Sci. Signal.">
        <title>Quantitative phosphoproteomic analysis of T cell receptor signaling reveals system-wide modulation of protein-protein interactions.</title>
        <authorList>
            <person name="Mayya V."/>
            <person name="Lundgren D.H."/>
            <person name="Hwang S.-I."/>
            <person name="Rezaul K."/>
            <person name="Wu L."/>
            <person name="Eng J.K."/>
            <person name="Rodionov V."/>
            <person name="Han D.K."/>
        </authorList>
    </citation>
    <scope>PHOSPHORYLATION [LARGE SCALE ANALYSIS] AT SER-428 (ISOFORM 2)</scope>
    <scope>PHOSPHORYLATION [LARGE SCALE ANALYSIS] AT SER-431 (ISOFORM 3)</scope>
    <scope>IDENTIFICATION BY MASS SPECTROMETRY [LARGE SCALE ANALYSIS]</scope>
    <source>
        <tissue>Leukemic T-cell</tissue>
    </source>
</reference>
<reference key="7">
    <citation type="journal article" date="2011" name="BMC Syst. Biol.">
        <title>Initial characterization of the human central proteome.</title>
        <authorList>
            <person name="Burkard T.R."/>
            <person name="Planyavsky M."/>
            <person name="Kaupe I."/>
            <person name="Breitwieser F.P."/>
            <person name="Buerckstuemmer T."/>
            <person name="Bennett K.L."/>
            <person name="Superti-Furga G."/>
            <person name="Colinge J."/>
        </authorList>
    </citation>
    <scope>IDENTIFICATION BY MASS SPECTROMETRY [LARGE SCALE ANALYSIS]</scope>
</reference>
<reference key="8">
    <citation type="journal article" date="2012" name="Mol. Cell. Biol.">
        <title>A novel 4EHP-GIGYF2 translational repressor complex is essential for mammalian development.</title>
        <authorList>
            <person name="Morita M."/>
            <person name="Ler L.W."/>
            <person name="Fabian M.R."/>
            <person name="Siddiqui N."/>
            <person name="Mullin M."/>
            <person name="Henderson V.C."/>
            <person name="Alain T."/>
            <person name="Fonseca B.D."/>
            <person name="Karashchuk G."/>
            <person name="Bennett C.F."/>
            <person name="Kabuta T."/>
            <person name="Higashi S."/>
            <person name="Larsson O."/>
            <person name="Topisirovic I."/>
            <person name="Smith R.J."/>
            <person name="Gingras A.C."/>
            <person name="Sonenberg N."/>
        </authorList>
    </citation>
    <scope>FUNCTION</scope>
    <scope>IDENTIFICATION IN THE 4EHP-GYF2 COMPLEX</scope>
</reference>
<reference key="9">
    <citation type="journal article" date="2014" name="J. Proteomics">
        <title>An enzyme assisted RP-RPLC approach for in-depth analysis of human liver phosphoproteome.</title>
        <authorList>
            <person name="Bian Y."/>
            <person name="Song C."/>
            <person name="Cheng K."/>
            <person name="Dong M."/>
            <person name="Wang F."/>
            <person name="Huang J."/>
            <person name="Sun D."/>
            <person name="Wang L."/>
            <person name="Ye M."/>
            <person name="Zou H."/>
        </authorList>
    </citation>
    <scope>PHOSPHORYLATION [LARGE SCALE ANALYSIS] AT SER-428 (ISOFORM 2)</scope>
    <scope>PHOSPHORYLATION [LARGE SCALE ANALYSIS] AT SER-431 (ISOFORM 3)</scope>
    <scope>IDENTIFICATION BY MASS SPECTROMETRY [LARGE SCALE ANALYSIS]</scope>
    <source>
        <tissue>Liver</tissue>
    </source>
</reference>
<reference key="10">
    <citation type="journal article" date="2016" name="Mol. Cell">
        <title>Initiation of quality control during poly(A) translation requires site-specific ribosome ubiquitination.</title>
        <authorList>
            <person name="Juszkiewicz S."/>
            <person name="Hegde R.S."/>
        </authorList>
    </citation>
    <scope>FUNCTION</scope>
    <scope>CATALYTIC ACTIVITY</scope>
    <scope>PATHWAY</scope>
</reference>
<reference key="11">
    <citation type="journal article" date="2017" name="Mol. Cell">
        <title>ZNF598 and RACK1 regulate mammalian ribosome-associated quality control function by mediating regulatory 40S ribosomal ubiquitylation.</title>
        <authorList>
            <person name="Sundaramoorthy E."/>
            <person name="Leonard M."/>
            <person name="Mak R."/>
            <person name="Liao J."/>
            <person name="Fulzele A."/>
            <person name="Bennett E.J."/>
        </authorList>
    </citation>
    <scope>FUNCTION</scope>
    <scope>CATALYTIC ACTIVITY</scope>
    <scope>PATHWAY</scope>
    <scope>MUTAGENESIS OF CYS-29</scope>
</reference>
<reference key="12">
    <citation type="journal article" date="2017" name="Nat. Commun.">
        <title>Ubiquitination of stalled ribosome triggers ribosome-associated quality control.</title>
        <authorList>
            <person name="Matsuo Y."/>
            <person name="Ikeuchi K."/>
            <person name="Saeki Y."/>
            <person name="Iwasaki S."/>
            <person name="Schmidt C."/>
            <person name="Udagawa T."/>
            <person name="Sato F."/>
            <person name="Tsuchiya H."/>
            <person name="Becker T."/>
            <person name="Tanaka K."/>
            <person name="Ingolia N.T."/>
            <person name="Beckmann R."/>
            <person name="Inada T."/>
        </authorList>
    </citation>
    <scope>SUBCELLULAR LOCATION</scope>
</reference>
<reference key="13">
    <citation type="journal article" date="2017" name="Nat. Commun.">
        <title>The E3 ubiquitin ligase and RNA-binding protein ZNF598 orchestrates ribosome quality control of premature polyadenylated mRNAs.</title>
        <authorList>
            <person name="Garzia A."/>
            <person name="Jafarnejad S.M."/>
            <person name="Meyer C."/>
            <person name="Chapat C."/>
            <person name="Gogakos T."/>
            <person name="Morozov P."/>
            <person name="Amiri M."/>
            <person name="Shapiro M."/>
            <person name="Molina H."/>
            <person name="Tuschl T."/>
            <person name="Sonenberg N."/>
        </authorList>
    </citation>
    <scope>FUNCTION</scope>
    <scope>CATALYTIC ACTIVITY</scope>
    <scope>PATHWAY</scope>
    <scope>INTERACTION WITH UBE2D3</scope>
</reference>
<reference key="14">
    <citation type="journal article" date="2018" name="Cell Rep.">
        <title>ZNF598 plays distinct roles in interferon-stimulated gene expression and poxvirus protein synthesis.</title>
        <authorList>
            <person name="DiGiuseppe S."/>
            <person name="Rollins M.G."/>
            <person name="Bartom E.T."/>
            <person name="Walsh D."/>
        </authorList>
    </citation>
    <scope>FUNCTION</scope>
    <scope>FUNCTION (MICROBIAL INFECTION)</scope>
</reference>
<reference key="15">
    <citation type="journal article" date="2018" name="Mol. Cell">
        <title>ZNF598 is a quality control sensor of collided ribosomes.</title>
        <authorList>
            <person name="Juszkiewicz S."/>
            <person name="Chandrasekaran V."/>
            <person name="Lin Z."/>
            <person name="Kraatz S."/>
            <person name="Ramakrishnan V."/>
            <person name="Hegde R.S."/>
        </authorList>
    </citation>
    <scope>FUNCTION</scope>
</reference>
<reference key="16">
    <citation type="journal article" date="2020" name="Mol. Cell">
        <title>The ASC-1 complex disassembles collided ribosomes.</title>
        <authorList>
            <person name="Juszkiewicz S."/>
            <person name="Speldewinde S.H."/>
            <person name="Wan L."/>
            <person name="Svejstrup J.Q."/>
            <person name="Hegde R.S."/>
        </authorList>
    </citation>
    <scope>FUNCTION</scope>
</reference>
<reference key="17">
    <citation type="journal article" date="2020" name="Mol. Cell">
        <title>GIGYF2 and 4EHP Inhibit Translation Initiation of Defective Messenger RNAs to Assist Ribosome-Associated Quality Control.</title>
        <authorList>
            <person name="Hickey K.L."/>
            <person name="Dickson K."/>
            <person name="Cogan J.Z."/>
            <person name="Replogle J.M."/>
            <person name="Schoof M."/>
            <person name="D'Orazio K.N."/>
            <person name="Sinha N.K."/>
            <person name="Hussmann J.A."/>
            <person name="Jost M."/>
            <person name="Frost A."/>
            <person name="Green R."/>
            <person name="Weissman J.S."/>
            <person name="Kostova K.K."/>
        </authorList>
    </citation>
    <scope>FUNCTION</scope>
    <scope>IDENTIFICATION IN THE 4EHP-GYF2 COMPLEX</scope>
</reference>
<reference key="18">
    <citation type="journal article" date="2020" name="Sci. Rep.">
        <title>Identification of a novel trigger complex that facilitates ribosome-associated quality control in mammalian cells.</title>
        <authorList>
            <person name="Hashimoto S."/>
            <person name="Sugiyama T."/>
            <person name="Yamazaki R."/>
            <person name="Nobuta R."/>
            <person name="Inada T."/>
        </authorList>
    </citation>
    <scope>FUNCTION</scope>
</reference>
<reference key="19">
    <citation type="journal article" date="2021" name="Mol. Cell">
        <title>Live-cell imaging reveals kinetic determinants of quality control triggered by ribosome stalling.</title>
        <authorList>
            <person name="Goldman D.H."/>
            <person name="Livingston N.M."/>
            <person name="Movsik J."/>
            <person name="Wu B."/>
            <person name="Green R."/>
        </authorList>
    </citation>
    <scope>FUNCTION</scope>
</reference>
<reference key="20">
    <citation type="journal article" date="2022" name="Nat. Commun.">
        <title>A distinct mammalian disome collision interface harbors K63-linked polyubiquitination of uS10 to trigger hRQT-mediated subunit dissociation.</title>
        <authorList>
            <person name="Narita M."/>
            <person name="Denk T."/>
            <person name="Matsuo Y."/>
            <person name="Sugiyama T."/>
            <person name="Kikuguchi C."/>
            <person name="Ito S."/>
            <person name="Sato N."/>
            <person name="Suzuki T."/>
            <person name="Hashimoto S."/>
            <person name="Machova I."/>
            <person name="Tesina P."/>
            <person name="Beckmann R."/>
            <person name="Inada T."/>
        </authorList>
    </citation>
    <scope>FUNCTION</scope>
    <scope>CATALYTIC ACTIVITY</scope>
    <scope>PATHWAY</scope>
</reference>
<comment type="function">
    <text evidence="7 8 9 10 12 13 14 15 16 17 18">E3 ubiquitin-protein ligase that plays a key role in the ribosome quality control (RQC), a pathway that takes place when a ribosome has stalled during translation, leading to degradation of nascent peptide chains (PubMed:28065601, PubMed:28132843, PubMed:28685749, PubMed:32099016, PubMed:32579943, PubMed:33581075). ZNF598 is activated when ribosomes are stalled within an mRNA following translation of prematurely polyadenylated mRNAs (PubMed:28065601, PubMed:28132843, PubMed:28685749). Acts as a ribosome collision sensor: specifically recognizes and binds collided di-ribosome, which arises when a trailing ribosome encounters a slower leading ribosome, leading to terminally arrest translation (PubMed:28065601, PubMed:28132843, PubMed:28685749, PubMed:30293783). Following binding to colliding ribosomes, mediates monoubiquitination of 40S ribosomal proteins RPS10/eS10 and RPS3/uS3, and 'Lys-63'-linked polyubiquitination of RPS20/uS10 (PubMed:28065601, PubMed:28132843, PubMed:28685749). Polyubiquitination of RPS20/uS10 promotes recruitment of the RQT (ribosome quality control trigger) complex, which drives the disassembly of stalled ribosomes, followed by degradation of nascent peptides (PubMed:32099016, PubMed:32579943, PubMed:36302773). E3 ubiquitin-protein ligase activity is dependent on the E2 ubiquitin-conjugating enzyme UBE2D3 (PubMed:28685749). Also acts as an adapter that recruits the 4EHP-GYF2 complex to mRNAs (PubMed:22751931, PubMed:32726578). Independently of its role in RQC, may also act as a negative regulator of interferon-stimulated gene (ISG) expression (PubMed:29719242).</text>
</comment>
<comment type="function">
    <text evidence="12">(Microbial infection) Required for poxvirus protein synthesis by mediating ubiquitination of RPS10/eS10 and RPS20/uS10 (PubMed:29719242). Poxvirus encoding mRNAs contain unusual 5' poly(A) leaders and ZNF598 is required for their translational efficiency, possibly via its ability to suppress readthrough or sliding on shorter poly(A) tracts (PubMed:29719242).</text>
</comment>
<comment type="catalytic activity">
    <reaction evidence="24 25 26 27">
        <text>S-ubiquitinyl-[E2 ubiquitin-conjugating enzyme]-L-cysteine + [acceptor protein]-L-lysine = [E2 ubiquitin-conjugating enzyme]-L-cysteine + N(6)-ubiquitinyl-[acceptor protein]-L-lysine.</text>
        <dbReference type="EC" id="2.3.2.27"/>
    </reaction>
</comment>
<comment type="pathway">
    <text evidence="8 9 10 18">Protein modification; protein ubiquitination.</text>
</comment>
<comment type="subunit">
    <text evidence="7 10 16">Interacts with the E2 ubiquitin-conjugating enzyme UBE2D3 (PubMed:28685749). Component of the 4EHP-GYF2 complex, at least composed of EIF4E2, GIGYF2 and ZNF598 (PubMed:22751931, PubMed:32726578).</text>
</comment>
<comment type="interaction">
    <interactant intactId="EBI-719433">
        <id>Q86UK7</id>
    </interactant>
    <interactant intactId="EBI-947774">
        <id>O75420</id>
        <label>GIGYF1</label>
    </interactant>
    <organismsDiffer>false</organismsDiffer>
    <experiments>2</experiments>
</comment>
<comment type="interaction">
    <interactant intactId="EBI-719433">
        <id>Q86UK7</id>
    </interactant>
    <interactant intactId="EBI-356498">
        <id>P62258</id>
        <label>YWHAE</label>
    </interactant>
    <organismsDiffer>false</organismsDiffer>
    <experiments>3</experiments>
</comment>
<comment type="subcellular location">
    <subcellularLocation>
        <location evidence="11">Cytoplasm</location>
        <location evidence="11">Cytosol</location>
    </subcellularLocation>
</comment>
<comment type="alternative products">
    <event type="alternative splicing"/>
    <isoform>
        <id>Q86UK7-1</id>
        <name>1</name>
        <sequence type="displayed"/>
    </isoform>
    <isoform>
        <id>Q86UK7-2</id>
        <name>2</name>
        <sequence type="described" ref="VSP_020661 VSP_020663 VSP_020664"/>
    </isoform>
    <isoform>
        <id>Q86UK7-3</id>
        <name>3</name>
        <sequence type="described" ref="VSP_020663"/>
    </isoform>
    <isoform>
        <id>Q86UK7-4</id>
        <name>4</name>
        <sequence type="described" ref="VSP_020660 VSP_020662 VSP_020664 VSP_020665"/>
    </isoform>
</comment>
<comment type="similarity">
    <text evidence="23">Belongs to the ZNF598/HEL2 family.</text>
</comment>
<comment type="sequence caution" evidence="23">
    <conflict type="erroneous initiation">
        <sequence resource="EMBL-CDS" id="BAB15777"/>
    </conflict>
</comment>
<organism>
    <name type="scientific">Homo sapiens</name>
    <name type="common">Human</name>
    <dbReference type="NCBI Taxonomy" id="9606"/>
    <lineage>
        <taxon>Eukaryota</taxon>
        <taxon>Metazoa</taxon>
        <taxon>Chordata</taxon>
        <taxon>Craniata</taxon>
        <taxon>Vertebrata</taxon>
        <taxon>Euteleostomi</taxon>
        <taxon>Mammalia</taxon>
        <taxon>Eutheria</taxon>
        <taxon>Euarchontoglires</taxon>
        <taxon>Primates</taxon>
        <taxon>Haplorrhini</taxon>
        <taxon>Catarrhini</taxon>
        <taxon>Hominidae</taxon>
        <taxon>Homo</taxon>
    </lineage>
</organism>
<evidence type="ECO:0000255" key="1">
    <source>
        <dbReference type="PROSITE-ProRule" id="PRU00042"/>
    </source>
</evidence>
<evidence type="ECO:0000255" key="2">
    <source>
        <dbReference type="PROSITE-ProRule" id="PRU00175"/>
    </source>
</evidence>
<evidence type="ECO:0000256" key="3">
    <source>
        <dbReference type="SAM" id="MobiDB-lite"/>
    </source>
</evidence>
<evidence type="ECO:0000269" key="4">
    <source>
    </source>
</evidence>
<evidence type="ECO:0000269" key="5">
    <source>
    </source>
</evidence>
<evidence type="ECO:0000269" key="6">
    <source>
    </source>
</evidence>
<evidence type="ECO:0000269" key="7">
    <source>
    </source>
</evidence>
<evidence type="ECO:0000269" key="8">
    <source>
    </source>
</evidence>
<evidence type="ECO:0000269" key="9">
    <source>
    </source>
</evidence>
<evidence type="ECO:0000269" key="10">
    <source>
    </source>
</evidence>
<evidence type="ECO:0000269" key="11">
    <source>
    </source>
</evidence>
<evidence type="ECO:0000269" key="12">
    <source>
    </source>
</evidence>
<evidence type="ECO:0000269" key="13">
    <source>
    </source>
</evidence>
<evidence type="ECO:0000269" key="14">
    <source>
    </source>
</evidence>
<evidence type="ECO:0000269" key="15">
    <source>
    </source>
</evidence>
<evidence type="ECO:0000269" key="16">
    <source>
    </source>
</evidence>
<evidence type="ECO:0000269" key="17">
    <source>
    </source>
</evidence>
<evidence type="ECO:0000269" key="18">
    <source>
    </source>
</evidence>
<evidence type="ECO:0000303" key="19">
    <source>
    </source>
</evidence>
<evidence type="ECO:0000303" key="20">
    <source>
    </source>
</evidence>
<evidence type="ECO:0000303" key="21">
    <source>
    </source>
</evidence>
<evidence type="ECO:0000303" key="22">
    <source>
    </source>
</evidence>
<evidence type="ECO:0000305" key="23"/>
<evidence type="ECO:0000305" key="24">
    <source>
    </source>
</evidence>
<evidence type="ECO:0000305" key="25">
    <source>
    </source>
</evidence>
<evidence type="ECO:0000305" key="26">
    <source>
    </source>
</evidence>
<evidence type="ECO:0000305" key="27">
    <source>
    </source>
</evidence>
<evidence type="ECO:0000312" key="28">
    <source>
        <dbReference type="HGNC" id="HGNC:28079"/>
    </source>
</evidence>
<evidence type="ECO:0007744" key="29">
    <source>
    </source>
</evidence>
<evidence type="ECO:0007744" key="30">
    <source>
    </source>
</evidence>
<evidence type="ECO:0007744" key="31">
    <source>
    </source>
</evidence>
<evidence type="ECO:0007744" key="32">
    <source>
    </source>
</evidence>
<dbReference type="EC" id="2.3.2.27" evidence="24 25 26 27"/>
<dbReference type="EMBL" id="AK024487">
    <property type="protein sequence ID" value="BAB15777.1"/>
    <property type="status" value="ALT_INIT"/>
    <property type="molecule type" value="mRNA"/>
</dbReference>
<dbReference type="EMBL" id="BC010990">
    <property type="protein sequence ID" value="AAH10990.2"/>
    <property type="molecule type" value="mRNA"/>
</dbReference>
<dbReference type="EMBL" id="BC041015">
    <property type="protein sequence ID" value="AAH41015.1"/>
    <property type="molecule type" value="mRNA"/>
</dbReference>
<dbReference type="EMBL" id="BC050477">
    <property type="protein sequence ID" value="AAH50477.1"/>
    <property type="molecule type" value="mRNA"/>
</dbReference>
<dbReference type="EMBL" id="AL834428">
    <property type="protein sequence ID" value="CAD39089.1"/>
    <property type="molecule type" value="mRNA"/>
</dbReference>
<dbReference type="RefSeq" id="NP_835461.2">
    <property type="nucleotide sequence ID" value="NM_178167.3"/>
</dbReference>
<dbReference type="BioGRID" id="124771">
    <property type="interactions" value="447"/>
</dbReference>
<dbReference type="ComplexPortal" id="CPX-2332">
    <property type="entry name" value="4EHP-GIGYF2 co-translational mRNA decay complex, ZNF598 variant"/>
</dbReference>
<dbReference type="ComplexPortal" id="CPX-2336">
    <property type="entry name" value="4EHP-GIGYF1 co-translational mRNA decay complex, ZNF598 variant"/>
</dbReference>
<dbReference type="CORUM" id="Q86UK7"/>
<dbReference type="FunCoup" id="Q86UK7">
    <property type="interactions" value="1356"/>
</dbReference>
<dbReference type="IntAct" id="Q86UK7">
    <property type="interactions" value="52"/>
</dbReference>
<dbReference type="MINT" id="Q86UK7"/>
<dbReference type="STRING" id="9606.ENSP00000455308"/>
<dbReference type="GlyGen" id="Q86UK7">
    <property type="glycosylation" value="3 sites, 1 O-linked glycan (1 site)"/>
</dbReference>
<dbReference type="iPTMnet" id="Q86UK7"/>
<dbReference type="PhosphoSitePlus" id="Q86UK7"/>
<dbReference type="SwissPalm" id="Q86UK7"/>
<dbReference type="BioMuta" id="ZNF598"/>
<dbReference type="DMDM" id="74727495"/>
<dbReference type="jPOST" id="Q86UK7"/>
<dbReference type="MassIVE" id="Q86UK7"/>
<dbReference type="PaxDb" id="9606-ENSP00000411409"/>
<dbReference type="PeptideAtlas" id="Q86UK7"/>
<dbReference type="ProteomicsDB" id="69826">
    <molecule id="Q86UK7-1"/>
</dbReference>
<dbReference type="ProteomicsDB" id="69827">
    <molecule id="Q86UK7-2"/>
</dbReference>
<dbReference type="ProteomicsDB" id="69828">
    <molecule id="Q86UK7-3"/>
</dbReference>
<dbReference type="ProteomicsDB" id="69829">
    <molecule id="Q86UK7-4"/>
</dbReference>
<dbReference type="Pumba" id="Q86UK7"/>
<dbReference type="DNASU" id="90850"/>
<dbReference type="GeneID" id="90850"/>
<dbReference type="KEGG" id="hsa:90850"/>
<dbReference type="UCSC" id="uc002cof.3">
    <molecule id="Q86UK7-1"/>
    <property type="organism name" value="human"/>
</dbReference>
<dbReference type="AGR" id="HGNC:28079"/>
<dbReference type="CTD" id="90850"/>
<dbReference type="DisGeNET" id="90850"/>
<dbReference type="GeneCards" id="ZNF598"/>
<dbReference type="HGNC" id="HGNC:28079">
    <property type="gene designation" value="ZNF598"/>
</dbReference>
<dbReference type="MIM" id="617508">
    <property type="type" value="gene"/>
</dbReference>
<dbReference type="neXtProt" id="NX_Q86UK7"/>
<dbReference type="PharmGKB" id="PA134944505"/>
<dbReference type="eggNOG" id="KOG2231">
    <property type="taxonomic scope" value="Eukaryota"/>
</dbReference>
<dbReference type="HOGENOM" id="CLU_015828_0_0_1"/>
<dbReference type="InParanoid" id="Q86UK7"/>
<dbReference type="OrthoDB" id="3838338at2759"/>
<dbReference type="PAN-GO" id="Q86UK7">
    <property type="GO annotations" value="4 GO annotations based on evolutionary models"/>
</dbReference>
<dbReference type="PhylomeDB" id="Q86UK7"/>
<dbReference type="TreeFam" id="TF316196"/>
<dbReference type="PathwayCommons" id="Q86UK7"/>
<dbReference type="SignaLink" id="Q86UK7"/>
<dbReference type="SIGNOR" id="Q86UK7"/>
<dbReference type="UniPathway" id="UPA00143"/>
<dbReference type="BioGRID-ORCS" id="90850">
    <property type="hits" value="35 hits in 408 CRISPR screens"/>
</dbReference>
<dbReference type="CD-CODE" id="232F8A39">
    <property type="entry name" value="P-body"/>
</dbReference>
<dbReference type="CD-CODE" id="DEE660B4">
    <property type="entry name" value="Stress granule"/>
</dbReference>
<dbReference type="ChiTaRS" id="ZNF598">
    <property type="organism name" value="human"/>
</dbReference>
<dbReference type="GenomeRNAi" id="90850"/>
<dbReference type="Pharos" id="Q86UK7">
    <property type="development level" value="Tbio"/>
</dbReference>
<dbReference type="PRO" id="PR:Q86UK7"/>
<dbReference type="Proteomes" id="UP000005640">
    <property type="component" value="Unplaced"/>
</dbReference>
<dbReference type="RNAct" id="Q86UK7">
    <property type="molecule type" value="protein"/>
</dbReference>
<dbReference type="GO" id="GO:0005829">
    <property type="term" value="C:cytosol"/>
    <property type="evidence" value="ECO:0000314"/>
    <property type="project" value="UniProtKB"/>
</dbReference>
<dbReference type="GO" id="GO:0022626">
    <property type="term" value="C:cytosolic ribosome"/>
    <property type="evidence" value="ECO:0000314"/>
    <property type="project" value="UniProt"/>
</dbReference>
<dbReference type="GO" id="GO:0140517">
    <property type="term" value="F:protein-RNA adaptor activity"/>
    <property type="evidence" value="ECO:0000314"/>
    <property type="project" value="UniProt"/>
</dbReference>
<dbReference type="GO" id="GO:0043022">
    <property type="term" value="F:ribosome binding"/>
    <property type="evidence" value="ECO:0000314"/>
    <property type="project" value="UniProtKB"/>
</dbReference>
<dbReference type="GO" id="GO:0003723">
    <property type="term" value="F:RNA binding"/>
    <property type="evidence" value="ECO:0007005"/>
    <property type="project" value="UniProtKB"/>
</dbReference>
<dbReference type="GO" id="GO:0170011">
    <property type="term" value="F:stalled ribosome sensor activity"/>
    <property type="evidence" value="ECO:0000314"/>
    <property type="project" value="UniProt"/>
</dbReference>
<dbReference type="GO" id="GO:0061630">
    <property type="term" value="F:ubiquitin protein ligase activity"/>
    <property type="evidence" value="ECO:0000314"/>
    <property type="project" value="UniProtKB"/>
</dbReference>
<dbReference type="GO" id="GO:0055106">
    <property type="term" value="F:ubiquitin-protein transferase regulator activity"/>
    <property type="evidence" value="ECO:0000314"/>
    <property type="project" value="UniProt"/>
</dbReference>
<dbReference type="GO" id="GO:0008270">
    <property type="term" value="F:zinc ion binding"/>
    <property type="evidence" value="ECO:0007669"/>
    <property type="project" value="UniProtKB-KW"/>
</dbReference>
<dbReference type="GO" id="GO:0045947">
    <property type="term" value="P:negative regulation of translational initiation"/>
    <property type="evidence" value="ECO:0000314"/>
    <property type="project" value="UniProt"/>
</dbReference>
<dbReference type="GO" id="GO:0070534">
    <property type="term" value="P:protein K63-linked ubiquitination"/>
    <property type="evidence" value="ECO:0000314"/>
    <property type="project" value="UniProtKB"/>
</dbReference>
<dbReference type="GO" id="GO:0006513">
    <property type="term" value="P:protein monoubiquitination"/>
    <property type="evidence" value="ECO:0000314"/>
    <property type="project" value="UniProtKB"/>
</dbReference>
<dbReference type="GO" id="GO:0016567">
    <property type="term" value="P:protein ubiquitination"/>
    <property type="evidence" value="ECO:0000315"/>
    <property type="project" value="UniProtKB"/>
</dbReference>
<dbReference type="GO" id="GO:0072344">
    <property type="term" value="P:rescue of stalled ribosome"/>
    <property type="evidence" value="ECO:0000314"/>
    <property type="project" value="UniProtKB"/>
</dbReference>
<dbReference type="GO" id="GO:1990116">
    <property type="term" value="P:ribosome-associated ubiquitin-dependent protein catabolic process"/>
    <property type="evidence" value="ECO:0000315"/>
    <property type="project" value="UniProtKB"/>
</dbReference>
<dbReference type="CDD" id="cd16615">
    <property type="entry name" value="RING-HC_ZNF598"/>
    <property type="match status" value="1"/>
</dbReference>
<dbReference type="InterPro" id="IPR041888">
    <property type="entry name" value="RING-HC_ZNF598/Hel2"/>
</dbReference>
<dbReference type="InterPro" id="IPR056437">
    <property type="entry name" value="Znf-C2H2_ZNF598/Hel2"/>
</dbReference>
<dbReference type="InterPro" id="IPR044288">
    <property type="entry name" value="ZNF598/Hel2"/>
</dbReference>
<dbReference type="InterPro" id="IPR013087">
    <property type="entry name" value="Znf_C2H2_type"/>
</dbReference>
<dbReference type="InterPro" id="IPR001841">
    <property type="entry name" value="Znf_RING"/>
</dbReference>
<dbReference type="PANTHER" id="PTHR22938:SF0">
    <property type="entry name" value="E3 UBIQUITIN-PROTEIN LIGASE ZNF598"/>
    <property type="match status" value="1"/>
</dbReference>
<dbReference type="PANTHER" id="PTHR22938">
    <property type="entry name" value="ZINC FINGER PROTEIN 598"/>
    <property type="match status" value="1"/>
</dbReference>
<dbReference type="Pfam" id="PF23202">
    <property type="entry name" value="PAH_ZNF598"/>
    <property type="match status" value="1"/>
</dbReference>
<dbReference type="Pfam" id="PF25447">
    <property type="entry name" value="RING_ZNF598"/>
    <property type="match status" value="1"/>
</dbReference>
<dbReference type="Pfam" id="PF23230">
    <property type="entry name" value="zf-C2H2_13"/>
    <property type="match status" value="1"/>
</dbReference>
<dbReference type="Pfam" id="PF23208">
    <property type="entry name" value="zf_C2H2_ZNF598"/>
    <property type="match status" value="1"/>
</dbReference>
<dbReference type="SMART" id="SM00355">
    <property type="entry name" value="ZnF_C2H2"/>
    <property type="match status" value="5"/>
</dbReference>
<dbReference type="PROSITE" id="PS50089">
    <property type="entry name" value="ZF_RING_2"/>
    <property type="match status" value="1"/>
</dbReference>
<dbReference type="PROSITE" id="PS00028">
    <property type="entry name" value="ZINC_FINGER_C2H2_1"/>
    <property type="match status" value="1"/>
</dbReference>
<gene>
    <name evidence="22 28" type="primary">ZNF598</name>
</gene>
<proteinExistence type="evidence at protein level"/>